<dbReference type="EC" id="7.1.1.-" evidence="1"/>
<dbReference type="EMBL" id="AP006728">
    <property type="protein sequence ID" value="BAD26830.1"/>
    <property type="molecule type" value="Genomic_DNA"/>
</dbReference>
<dbReference type="SMR" id="P0CD16"/>
<dbReference type="STRING" id="4536.P0CD16"/>
<dbReference type="eggNOG" id="KOG4668">
    <property type="taxonomic scope" value="Eukaryota"/>
</dbReference>
<dbReference type="Proteomes" id="UP000006591">
    <property type="component" value="Chloroplast"/>
</dbReference>
<dbReference type="GO" id="GO:0009535">
    <property type="term" value="C:chloroplast thylakoid membrane"/>
    <property type="evidence" value="ECO:0007669"/>
    <property type="project" value="UniProtKB-SubCell"/>
</dbReference>
<dbReference type="GO" id="GO:0008137">
    <property type="term" value="F:NADH dehydrogenase (ubiquinone) activity"/>
    <property type="evidence" value="ECO:0007669"/>
    <property type="project" value="InterPro"/>
</dbReference>
<dbReference type="GO" id="GO:0048038">
    <property type="term" value="F:quinone binding"/>
    <property type="evidence" value="ECO:0007669"/>
    <property type="project" value="UniProtKB-KW"/>
</dbReference>
<dbReference type="GO" id="GO:0042773">
    <property type="term" value="P:ATP synthesis coupled electron transport"/>
    <property type="evidence" value="ECO:0007669"/>
    <property type="project" value="InterPro"/>
</dbReference>
<dbReference type="GO" id="GO:0019684">
    <property type="term" value="P:photosynthesis, light reaction"/>
    <property type="evidence" value="ECO:0007669"/>
    <property type="project" value="UniProtKB-UniRule"/>
</dbReference>
<dbReference type="HAMAP" id="MF_00445">
    <property type="entry name" value="NDH1_NuoN_1"/>
    <property type="match status" value="1"/>
</dbReference>
<dbReference type="InterPro" id="IPR010096">
    <property type="entry name" value="NADH-Q_OxRdtase_suN/2"/>
</dbReference>
<dbReference type="InterPro" id="IPR001750">
    <property type="entry name" value="ND/Mrp_TM"/>
</dbReference>
<dbReference type="InterPro" id="IPR045693">
    <property type="entry name" value="Ndh2_N"/>
</dbReference>
<dbReference type="NCBIfam" id="TIGR01770">
    <property type="entry name" value="NDH_I_N"/>
    <property type="match status" value="1"/>
</dbReference>
<dbReference type="NCBIfam" id="NF002701">
    <property type="entry name" value="PRK02504.1"/>
    <property type="match status" value="1"/>
</dbReference>
<dbReference type="PANTHER" id="PTHR22773">
    <property type="entry name" value="NADH DEHYDROGENASE"/>
    <property type="match status" value="1"/>
</dbReference>
<dbReference type="Pfam" id="PF19530">
    <property type="entry name" value="Ndh2_N"/>
    <property type="match status" value="1"/>
</dbReference>
<dbReference type="Pfam" id="PF00361">
    <property type="entry name" value="Proton_antipo_M"/>
    <property type="match status" value="1"/>
</dbReference>
<dbReference type="PRINTS" id="PR01434">
    <property type="entry name" value="NADHDHGNASE5"/>
</dbReference>
<reference key="1">
    <citation type="journal article" date="2004" name="Gene">
        <title>The complete nucleotide sequence of wild rice (Oryza nivara) chloroplast genome: first genome wide comparative sequence analysis of wild and cultivated rice.</title>
        <authorList>
            <person name="Masood M.S."/>
            <person name="Nishikawa T."/>
            <person name="Fukuoka S."/>
            <person name="Njenga P.K."/>
            <person name="Tsudzuki T."/>
            <person name="Kadowaki K."/>
        </authorList>
    </citation>
    <scope>NUCLEOTIDE SEQUENCE [LARGE SCALE GENOMIC DNA]</scope>
    <source>
        <strain evidence="2">cv. SL10</strain>
    </source>
</reference>
<keyword id="KW-0150">Chloroplast</keyword>
<keyword id="KW-0472">Membrane</keyword>
<keyword id="KW-0520">NAD</keyword>
<keyword id="KW-0521">NADP</keyword>
<keyword id="KW-0934">Plastid</keyword>
<keyword id="KW-0618">Plastoquinone</keyword>
<keyword id="KW-0874">Quinone</keyword>
<keyword id="KW-1185">Reference proteome</keyword>
<keyword id="KW-0793">Thylakoid</keyword>
<keyword id="KW-1278">Translocase</keyword>
<keyword id="KW-0812">Transmembrane</keyword>
<keyword id="KW-1133">Transmembrane helix</keyword>
<keyword id="KW-0813">Transport</keyword>
<accession>P0CD16</accession>
<accession>Q6ENC2</accession>
<comment type="function">
    <text evidence="1">NDH shuttles electrons from NAD(P)H:plastoquinone, via FMN and iron-sulfur (Fe-S) centers, to quinones in the photosynthetic chain and possibly in a chloroplast respiratory chain. The immediate electron acceptor for the enzyme in this species is believed to be plastoquinone. Couples the redox reaction to proton translocation, and thus conserves the redox energy in a proton gradient.</text>
</comment>
<comment type="catalytic activity">
    <reaction evidence="1">
        <text>a plastoquinone + NADH + (n+1) H(+)(in) = a plastoquinol + NAD(+) + n H(+)(out)</text>
        <dbReference type="Rhea" id="RHEA:42608"/>
        <dbReference type="Rhea" id="RHEA-COMP:9561"/>
        <dbReference type="Rhea" id="RHEA-COMP:9562"/>
        <dbReference type="ChEBI" id="CHEBI:15378"/>
        <dbReference type="ChEBI" id="CHEBI:17757"/>
        <dbReference type="ChEBI" id="CHEBI:57540"/>
        <dbReference type="ChEBI" id="CHEBI:57945"/>
        <dbReference type="ChEBI" id="CHEBI:62192"/>
    </reaction>
</comment>
<comment type="catalytic activity">
    <reaction evidence="1">
        <text>a plastoquinone + NADPH + (n+1) H(+)(in) = a plastoquinol + NADP(+) + n H(+)(out)</text>
        <dbReference type="Rhea" id="RHEA:42612"/>
        <dbReference type="Rhea" id="RHEA-COMP:9561"/>
        <dbReference type="Rhea" id="RHEA-COMP:9562"/>
        <dbReference type="ChEBI" id="CHEBI:15378"/>
        <dbReference type="ChEBI" id="CHEBI:17757"/>
        <dbReference type="ChEBI" id="CHEBI:57783"/>
        <dbReference type="ChEBI" id="CHEBI:58349"/>
        <dbReference type="ChEBI" id="CHEBI:62192"/>
    </reaction>
</comment>
<comment type="subunit">
    <text evidence="1">NDH is composed of at least 16 different subunits, 5 of which are encoded in the nucleus.</text>
</comment>
<comment type="subcellular location">
    <subcellularLocation>
        <location evidence="1">Plastid</location>
        <location evidence="1">Chloroplast thylakoid membrane</location>
        <topology evidence="1">Multi-pass membrane protein</topology>
    </subcellularLocation>
</comment>
<comment type="similarity">
    <text evidence="1">Belongs to the complex I subunit 2 family.</text>
</comment>
<sequence>MIWHVQNENFILDSTRIFMKAFHLLLFQGSFIFPECILIFGLILLLMIDLTSDQKDRPWFYFISSTSLVISITALLFRWREEPIISFSGNFQTNNFNEIFQFLILLCSTLCIPLSVEYIECTEMAITEFLLFVLTATLGGMFLCGANDLITIFVAPECFSLCSYLLSGYTKRDLRSNEATMKYLLMGGASSSILVHGFSWLYGSSGGEIELQEIVNGLINTQMYNSPGISIALISITVGLGFKLSPAPFHQWTPDVYEGSPTPVVAFLSVTSKVAASASATRILDIPFYFSSNEWHLLLEILAILSMILGNLLAITQTSMKRMLAYSSIGQIGYVIIGIIVGDSNDGYASMITYMLFYISMNLGTFACIVLFGLRTGTDNIRDYAGLYTKDPFLALSLALCLLSLGGLPPLAGFFGKLYLFWCGWQAGLYFLVSIGLLTSVLSIYYYLKIVKLLMTGRNQEITPYVRNYRRSPLRSNNSIELSMTVCVIASTIPGISMNPILAIAQDTLF</sequence>
<protein>
    <recommendedName>
        <fullName evidence="1">NAD(P)H-quinone oxidoreductase subunit 2 A, chloroplastic</fullName>
        <ecNumber evidence="1">7.1.1.-</ecNumber>
    </recommendedName>
    <alternativeName>
        <fullName evidence="1">NAD(P)H dehydrogenase, subunit 2 A</fullName>
    </alternativeName>
    <alternativeName>
        <fullName evidence="1">NADH-plastoquinone oxidoreductase subunit 2 A</fullName>
    </alternativeName>
</protein>
<gene>
    <name evidence="1" type="primary">ndhB1</name>
</gene>
<feature type="chain" id="PRO_0000117671" description="NAD(P)H-quinone oxidoreductase subunit 2 A, chloroplastic">
    <location>
        <begin position="1"/>
        <end position="510"/>
    </location>
</feature>
<feature type="transmembrane region" description="Helical" evidence="1">
    <location>
        <begin position="31"/>
        <end position="51"/>
    </location>
</feature>
<feature type="transmembrane region" description="Helical" evidence="1">
    <location>
        <begin position="59"/>
        <end position="79"/>
    </location>
</feature>
<feature type="transmembrane region" description="Helical" evidence="1">
    <location>
        <begin position="99"/>
        <end position="119"/>
    </location>
</feature>
<feature type="transmembrane region" description="Helical" evidence="1">
    <location>
        <begin position="124"/>
        <end position="144"/>
    </location>
</feature>
<feature type="transmembrane region" description="Helical" evidence="1">
    <location>
        <begin position="149"/>
        <end position="169"/>
    </location>
</feature>
<feature type="transmembrane region" description="Helical" evidence="1">
    <location>
        <begin position="183"/>
        <end position="203"/>
    </location>
</feature>
<feature type="transmembrane region" description="Helical" evidence="1">
    <location>
        <begin position="229"/>
        <end position="249"/>
    </location>
</feature>
<feature type="transmembrane region" description="Helical" evidence="1">
    <location>
        <begin position="295"/>
        <end position="315"/>
    </location>
</feature>
<feature type="transmembrane region" description="Helical" evidence="1">
    <location>
        <begin position="323"/>
        <end position="343"/>
    </location>
</feature>
<feature type="transmembrane region" description="Helical" evidence="1">
    <location>
        <begin position="354"/>
        <end position="374"/>
    </location>
</feature>
<feature type="transmembrane region" description="Helical" evidence="1">
    <location>
        <begin position="395"/>
        <end position="415"/>
    </location>
</feature>
<feature type="transmembrane region" description="Helical" evidence="1">
    <location>
        <begin position="418"/>
        <end position="438"/>
    </location>
</feature>
<organism>
    <name type="scientific">Oryza nivara</name>
    <name type="common">Indian wild rice</name>
    <name type="synonym">Oryza sativa f. spontanea</name>
    <dbReference type="NCBI Taxonomy" id="4536"/>
    <lineage>
        <taxon>Eukaryota</taxon>
        <taxon>Viridiplantae</taxon>
        <taxon>Streptophyta</taxon>
        <taxon>Embryophyta</taxon>
        <taxon>Tracheophyta</taxon>
        <taxon>Spermatophyta</taxon>
        <taxon>Magnoliopsida</taxon>
        <taxon>Liliopsida</taxon>
        <taxon>Poales</taxon>
        <taxon>Poaceae</taxon>
        <taxon>BOP clade</taxon>
        <taxon>Oryzoideae</taxon>
        <taxon>Oryzeae</taxon>
        <taxon>Oryzinae</taxon>
        <taxon>Oryza</taxon>
    </lineage>
</organism>
<geneLocation type="chloroplast"/>
<proteinExistence type="inferred from homology"/>
<evidence type="ECO:0000255" key="1">
    <source>
        <dbReference type="HAMAP-Rule" id="MF_00445"/>
    </source>
</evidence>
<evidence type="ECO:0000312" key="2">
    <source>
        <dbReference type="Proteomes" id="UP000006591"/>
    </source>
</evidence>
<name>NU2C1_ORYNI</name>